<sequence length="220" mass="25035">MEFLFGRRKTPEEMLRQNQRALNKAMREMDRERQKLEQQEKKIIADIKKMAKQGQMDAVKIMAKDLVRTRRYVKKFIMMRANIQAVSLKIQTLKSNNSMAQAMKGVTKAMATMNRQLKLPQIQKIMMEFEKQSEIMDMKEEMMNDAIDDAMGDEDDEEESDAVVSQVLDELGLTLTDELSNLPSTGGSLSVAGAKKGEPSAALADADADLEERLNNLRRD</sequence>
<protein>
    <recommendedName>
        <fullName>Charged multivesicular body protein 2a</fullName>
    </recommendedName>
    <alternativeName>
        <fullName>Chromatin-modifying protein 2a</fullName>
        <shortName>CHMP2a</shortName>
    </alternativeName>
</protein>
<accession>Q6DFS6</accession>
<accession>Q28E86</accession>
<organism>
    <name type="scientific">Xenopus tropicalis</name>
    <name type="common">Western clawed frog</name>
    <name type="synonym">Silurana tropicalis</name>
    <dbReference type="NCBI Taxonomy" id="8364"/>
    <lineage>
        <taxon>Eukaryota</taxon>
        <taxon>Metazoa</taxon>
        <taxon>Chordata</taxon>
        <taxon>Craniata</taxon>
        <taxon>Vertebrata</taxon>
        <taxon>Euteleostomi</taxon>
        <taxon>Amphibia</taxon>
        <taxon>Batrachia</taxon>
        <taxon>Anura</taxon>
        <taxon>Pipoidea</taxon>
        <taxon>Pipidae</taxon>
        <taxon>Xenopodinae</taxon>
        <taxon>Xenopus</taxon>
        <taxon>Silurana</taxon>
    </lineage>
</organism>
<comment type="function">
    <text evidence="1">Probable core component of the endosomal sorting required for transport complex III (ESCRT-III) which is involved in multivesicular bodies (MVBs) formation and sorting of endosomal cargo proteins into MVBs. MVBs contain intraluminal vesicles (ILVs) that are generated by invagination and scission from the limiting membrane of the endosome and mostly are delivered to lysosomes enabling degradation of membrane proteins, such as stimulated growth factor receptors, lysosomal enzymes and lipids (By similarity).</text>
</comment>
<comment type="subunit">
    <text evidence="1">Probable core component of the endosomal sorting required for transport complex III (ESCRT-III). ESCRT-III components are thought to multimerize to form a flat lattice on the perimeter membrane of the endosome (By similarity).</text>
</comment>
<comment type="subcellular location">
    <subcellularLocation>
        <location evidence="1">Late endosome membrane</location>
        <topology evidence="1">Peripheral membrane protein</topology>
        <orientation evidence="1">Cytoplasmic side</orientation>
    </subcellularLocation>
    <subcellularLocation>
        <location evidence="1">Cytoplasm</location>
    </subcellularLocation>
</comment>
<comment type="similarity">
    <text evidence="4">Belongs to the SNF7 family.</text>
</comment>
<proteinExistence type="evidence at transcript level"/>
<evidence type="ECO:0000250" key="1"/>
<evidence type="ECO:0000255" key="2"/>
<evidence type="ECO:0000256" key="3">
    <source>
        <dbReference type="SAM" id="MobiDB-lite"/>
    </source>
</evidence>
<evidence type="ECO:0000305" key="4"/>
<dbReference type="EMBL" id="CR848397">
    <property type="protein sequence ID" value="CAJ82871.1"/>
    <property type="molecule type" value="mRNA"/>
</dbReference>
<dbReference type="EMBL" id="BC076657">
    <property type="protein sequence ID" value="AAH76657.1"/>
    <property type="molecule type" value="mRNA"/>
</dbReference>
<dbReference type="EMBL" id="BC082521">
    <property type="protein sequence ID" value="AAH82521.1"/>
    <property type="molecule type" value="mRNA"/>
</dbReference>
<dbReference type="RefSeq" id="NP_001005008.1">
    <property type="nucleotide sequence ID" value="NM_001005008.1"/>
</dbReference>
<dbReference type="RefSeq" id="XP_012821866.1">
    <property type="nucleotide sequence ID" value="XM_012966412.3"/>
</dbReference>
<dbReference type="SMR" id="Q6DFS6"/>
<dbReference type="FunCoup" id="Q6DFS6">
    <property type="interactions" value="2605"/>
</dbReference>
<dbReference type="STRING" id="8364.ENSXETP00000041599"/>
<dbReference type="PaxDb" id="8364-ENSXETP00000041697"/>
<dbReference type="DNASU" id="448496"/>
<dbReference type="GeneID" id="448496"/>
<dbReference type="KEGG" id="xtr:448496"/>
<dbReference type="AGR" id="Xenbase:XB-GENE-1005459"/>
<dbReference type="CTD" id="27243"/>
<dbReference type="Xenbase" id="XB-GENE-1005459">
    <property type="gene designation" value="chmp2a"/>
</dbReference>
<dbReference type="eggNOG" id="KOG3230">
    <property type="taxonomic scope" value="Eukaryota"/>
</dbReference>
<dbReference type="HOGENOM" id="CLU_069208_1_0_1"/>
<dbReference type="InParanoid" id="Q6DFS6"/>
<dbReference type="OMA" id="KMAKMNQ"/>
<dbReference type="OrthoDB" id="10252926at2759"/>
<dbReference type="PhylomeDB" id="Q6DFS6"/>
<dbReference type="TreeFam" id="TF300118"/>
<dbReference type="Reactome" id="R-XTR-1632852">
    <property type="pathway name" value="Macroautophagy"/>
</dbReference>
<dbReference type="Reactome" id="R-XTR-432720">
    <property type="pathway name" value="Lysosome Vesicle Biogenesis"/>
</dbReference>
<dbReference type="Reactome" id="R-XTR-917729">
    <property type="pathway name" value="Endosomal Sorting Complex Required For Transport (ESCRT)"/>
</dbReference>
<dbReference type="Reactome" id="R-XTR-9668328">
    <property type="pathway name" value="Sealing of the nuclear envelope (NE) by ESCRT-III"/>
</dbReference>
<dbReference type="Proteomes" id="UP000008143">
    <property type="component" value="Chromosome 7"/>
</dbReference>
<dbReference type="Bgee" id="ENSXETG00000019244">
    <property type="expression patterns" value="Expressed in testis and 18 other cell types or tissues"/>
</dbReference>
<dbReference type="GO" id="GO:0031902">
    <property type="term" value="C:late endosome membrane"/>
    <property type="evidence" value="ECO:0007669"/>
    <property type="project" value="UniProtKB-SubCell"/>
</dbReference>
<dbReference type="GO" id="GO:0005635">
    <property type="term" value="C:nuclear envelope"/>
    <property type="evidence" value="ECO:0000250"/>
    <property type="project" value="UniProtKB"/>
</dbReference>
<dbReference type="GO" id="GO:0010458">
    <property type="term" value="P:exit from mitosis"/>
    <property type="evidence" value="ECO:0000250"/>
    <property type="project" value="UniProtKB"/>
</dbReference>
<dbReference type="GO" id="GO:0031468">
    <property type="term" value="P:nuclear membrane reassembly"/>
    <property type="evidence" value="ECO:0000250"/>
    <property type="project" value="UniProtKB"/>
</dbReference>
<dbReference type="GO" id="GO:0015031">
    <property type="term" value="P:protein transport"/>
    <property type="evidence" value="ECO:0007669"/>
    <property type="project" value="UniProtKB-KW"/>
</dbReference>
<dbReference type="GO" id="GO:0007034">
    <property type="term" value="P:vacuolar transport"/>
    <property type="evidence" value="ECO:0007669"/>
    <property type="project" value="InterPro"/>
</dbReference>
<dbReference type="Gene3D" id="6.10.140.1230">
    <property type="match status" value="1"/>
</dbReference>
<dbReference type="InterPro" id="IPR005024">
    <property type="entry name" value="Snf7_fam"/>
</dbReference>
<dbReference type="PANTHER" id="PTHR10476">
    <property type="entry name" value="CHARGED MULTIVESICULAR BODY PROTEIN"/>
    <property type="match status" value="1"/>
</dbReference>
<dbReference type="Pfam" id="PF03357">
    <property type="entry name" value="Snf7"/>
    <property type="match status" value="1"/>
</dbReference>
<keyword id="KW-0175">Coiled coil</keyword>
<keyword id="KW-0963">Cytoplasm</keyword>
<keyword id="KW-0967">Endosome</keyword>
<keyword id="KW-0472">Membrane</keyword>
<keyword id="KW-0653">Protein transport</keyword>
<keyword id="KW-1185">Reference proteome</keyword>
<keyword id="KW-0813">Transport</keyword>
<reference key="1">
    <citation type="submission" date="2006-03" db="EMBL/GenBank/DDBJ databases">
        <authorList>
            <consortium name="Sanger Xenopus tropicalis EST/cDNA project"/>
        </authorList>
    </citation>
    <scope>NUCLEOTIDE SEQUENCE [LARGE SCALE MRNA]</scope>
    <source>
        <tissue>Neurula</tissue>
    </source>
</reference>
<reference key="2">
    <citation type="submission" date="2004-09" db="EMBL/GenBank/DDBJ databases">
        <authorList>
            <consortium name="NIH - Xenopus Gene Collection (XGC) project"/>
        </authorList>
    </citation>
    <scope>NUCLEOTIDE SEQUENCE [LARGE SCALE MRNA]</scope>
</reference>
<gene>
    <name type="primary">chmp2a</name>
    <name type="ORF">TNeu078g14.1</name>
</gene>
<name>CHM2A_XENTR</name>
<feature type="chain" id="PRO_0000211467" description="Charged multivesicular body protein 2a">
    <location>
        <begin position="1"/>
        <end position="220"/>
    </location>
</feature>
<feature type="region of interest" description="Disordered" evidence="3">
    <location>
        <begin position="179"/>
        <end position="208"/>
    </location>
</feature>
<feature type="coiled-coil region" evidence="2">
    <location>
        <begin position="12"/>
        <end position="53"/>
    </location>
</feature>
<feature type="coiled-coil region" evidence="2">
    <location>
        <begin position="199"/>
        <end position="220"/>
    </location>
</feature>
<feature type="short sequence motif" description="MIT-interacting motif">
    <location>
        <begin position="208"/>
        <end position="218"/>
    </location>
</feature>